<keyword id="KW-0694">RNA-binding</keyword>
<keyword id="KW-0804">Transcription</keyword>
<keyword id="KW-0889">Transcription antitermination</keyword>
<keyword id="KW-0805">Transcription regulation</keyword>
<protein>
    <recommendedName>
        <fullName evidence="1">Transcription antitermination protein NusB</fullName>
    </recommendedName>
    <alternativeName>
        <fullName evidence="1">Antitermination factor NusB</fullName>
    </alternativeName>
</protein>
<gene>
    <name evidence="1" type="primary">nusB</name>
    <name type="ordered locus">Cyan7425_4342</name>
</gene>
<name>NUSB_CYAP4</name>
<comment type="function">
    <text evidence="1">Involved in transcription antitermination. Required for transcription of ribosomal RNA (rRNA) genes. Binds specifically to the boxA antiterminator sequence of the ribosomal RNA (rrn) operons.</text>
</comment>
<comment type="similarity">
    <text evidence="1">Belongs to the NusB family.</text>
</comment>
<proteinExistence type="inferred from homology"/>
<reference key="1">
    <citation type="journal article" date="2011" name="MBio">
        <title>Novel metabolic attributes of the genus Cyanothece, comprising a group of unicellular nitrogen-fixing Cyanobacteria.</title>
        <authorList>
            <person name="Bandyopadhyay A."/>
            <person name="Elvitigala T."/>
            <person name="Welsh E."/>
            <person name="Stockel J."/>
            <person name="Liberton M."/>
            <person name="Min H."/>
            <person name="Sherman L.A."/>
            <person name="Pakrasi H.B."/>
        </authorList>
    </citation>
    <scope>NUCLEOTIDE SEQUENCE [LARGE SCALE GENOMIC DNA]</scope>
    <source>
        <strain>PCC 7425 / ATCC 29141</strain>
    </source>
</reference>
<dbReference type="EMBL" id="CP001344">
    <property type="protein sequence ID" value="ACL46652.1"/>
    <property type="molecule type" value="Genomic_DNA"/>
</dbReference>
<dbReference type="SMR" id="B8HYJ8"/>
<dbReference type="STRING" id="395961.Cyan7425_4342"/>
<dbReference type="KEGG" id="cyn:Cyan7425_4342"/>
<dbReference type="eggNOG" id="COG0781">
    <property type="taxonomic scope" value="Bacteria"/>
</dbReference>
<dbReference type="HOGENOM" id="CLU_087843_0_0_3"/>
<dbReference type="OrthoDB" id="3528057at2"/>
<dbReference type="GO" id="GO:0005829">
    <property type="term" value="C:cytosol"/>
    <property type="evidence" value="ECO:0007669"/>
    <property type="project" value="TreeGrafter"/>
</dbReference>
<dbReference type="GO" id="GO:0003723">
    <property type="term" value="F:RNA binding"/>
    <property type="evidence" value="ECO:0007669"/>
    <property type="project" value="UniProtKB-UniRule"/>
</dbReference>
<dbReference type="GO" id="GO:0006353">
    <property type="term" value="P:DNA-templated transcription termination"/>
    <property type="evidence" value="ECO:0007669"/>
    <property type="project" value="UniProtKB-UniRule"/>
</dbReference>
<dbReference type="GO" id="GO:0031564">
    <property type="term" value="P:transcription antitermination"/>
    <property type="evidence" value="ECO:0007669"/>
    <property type="project" value="UniProtKB-KW"/>
</dbReference>
<dbReference type="Gene3D" id="1.10.940.10">
    <property type="entry name" value="NusB-like"/>
    <property type="match status" value="1"/>
</dbReference>
<dbReference type="HAMAP" id="MF_00073">
    <property type="entry name" value="NusB"/>
    <property type="match status" value="1"/>
</dbReference>
<dbReference type="InterPro" id="IPR035926">
    <property type="entry name" value="NusB-like_sf"/>
</dbReference>
<dbReference type="InterPro" id="IPR011605">
    <property type="entry name" value="NusB_fam"/>
</dbReference>
<dbReference type="InterPro" id="IPR006027">
    <property type="entry name" value="NusB_RsmB_TIM44"/>
</dbReference>
<dbReference type="NCBIfam" id="TIGR01951">
    <property type="entry name" value="nusB"/>
    <property type="match status" value="1"/>
</dbReference>
<dbReference type="PANTHER" id="PTHR11078:SF3">
    <property type="entry name" value="ANTITERMINATION NUSB DOMAIN-CONTAINING PROTEIN"/>
    <property type="match status" value="1"/>
</dbReference>
<dbReference type="PANTHER" id="PTHR11078">
    <property type="entry name" value="N UTILIZATION SUBSTANCE PROTEIN B-RELATED"/>
    <property type="match status" value="1"/>
</dbReference>
<dbReference type="Pfam" id="PF01029">
    <property type="entry name" value="NusB"/>
    <property type="match status" value="1"/>
</dbReference>
<dbReference type="SUPFAM" id="SSF48013">
    <property type="entry name" value="NusB-like"/>
    <property type="match status" value="1"/>
</dbReference>
<accession>B8HYJ8</accession>
<organism>
    <name type="scientific">Cyanothece sp. (strain PCC 7425 / ATCC 29141)</name>
    <dbReference type="NCBI Taxonomy" id="395961"/>
    <lineage>
        <taxon>Bacteria</taxon>
        <taxon>Bacillati</taxon>
        <taxon>Cyanobacteriota</taxon>
        <taxon>Cyanophyceae</taxon>
        <taxon>Gomontiellales</taxon>
        <taxon>Cyanothecaceae</taxon>
        <taxon>Cyanothece</taxon>
    </lineage>
</organism>
<feature type="chain" id="PRO_1000192431" description="Transcription antitermination protein NusB">
    <location>
        <begin position="1"/>
        <end position="209"/>
    </location>
</feature>
<evidence type="ECO:0000255" key="1">
    <source>
        <dbReference type="HAMAP-Rule" id="MF_00073"/>
    </source>
</evidence>
<sequence length="209" mass="23459">MQPRRIARELALLALSQLPQKPERLTTQDLQSVVVAAVRTLAGEAQDALETAAMELKRGRDRLLASEIQAVDVQSSRAMVTEAITLAETAVNRLGMVLDLPEFVQLANQQQVRDFSLDILKQVLTHRTAIDHLLETALVDWQFNRLAQIDRNILRIAVAEILYLKTPTQVTINEAVELAKRYSDEDGYRFVNGVLRRTIPHLEAQAQGT</sequence>